<reference key="1">
    <citation type="journal article" date="1983" name="Biotechnology (N.Y.)">
        <title>Structural analysis of nuclear genes coding for the precursor to the small subunit of wheat ribulose-1,5-bisphosphate carboxylase.</title>
        <authorList>
            <person name="Broglie R."/>
            <person name="Coruzzi G."/>
            <person name="Lamppa G."/>
            <person name="Keith B."/>
            <person name="Chua N.H."/>
        </authorList>
    </citation>
    <scope>NUCLEOTIDE SEQUENCE [GENOMIC DNA]</scope>
    <source>
        <strain>cv. Era</strain>
    </source>
</reference>
<sequence>MAPAVMASSATTVAPFQGLKSTAGLPVSRRSRGSLGSVSNGGRIRCMQVWPIEGIKKFETLSYLPPLSTEALSKQVDYLIRSKWVPCLEFSKVGFVFREHNSSPGYYDGRYWTMWKLPMFGCTDATQVLNEVEEVKKEYPDAYVRVIGFDNLRQVQCVSFIAFRPPGCEESGKA</sequence>
<accession>P00871</accession>
<dbReference type="EMBL" id="M37328">
    <property type="protein sequence ID" value="AAA34301.1"/>
    <property type="molecule type" value="Genomic_DNA"/>
</dbReference>
<dbReference type="PIR" id="A01090">
    <property type="entry name" value="RKWTS"/>
</dbReference>
<dbReference type="SMR" id="P00871"/>
<dbReference type="STRING" id="4565.P00871"/>
<dbReference type="PaxDb" id="4565-Traes_2BS_640D008BF.1"/>
<dbReference type="eggNOG" id="ENOG502QT0M">
    <property type="taxonomic scope" value="Eukaryota"/>
</dbReference>
<dbReference type="Proteomes" id="UP000019116">
    <property type="component" value="Unplaced"/>
</dbReference>
<dbReference type="ExpressionAtlas" id="P00871">
    <property type="expression patterns" value="baseline and differential"/>
</dbReference>
<dbReference type="GO" id="GO:0009507">
    <property type="term" value="C:chloroplast"/>
    <property type="evidence" value="ECO:0007669"/>
    <property type="project" value="UniProtKB-SubCell"/>
</dbReference>
<dbReference type="GO" id="GO:0016984">
    <property type="term" value="F:ribulose-bisphosphate carboxylase activity"/>
    <property type="evidence" value="ECO:0007669"/>
    <property type="project" value="UniProtKB-UniRule"/>
</dbReference>
<dbReference type="GO" id="GO:0009853">
    <property type="term" value="P:photorespiration"/>
    <property type="evidence" value="ECO:0007669"/>
    <property type="project" value="UniProtKB-KW"/>
</dbReference>
<dbReference type="GO" id="GO:0019253">
    <property type="term" value="P:reductive pentose-phosphate cycle"/>
    <property type="evidence" value="ECO:0007669"/>
    <property type="project" value="UniProtKB-UniRule"/>
</dbReference>
<dbReference type="CDD" id="cd03527">
    <property type="entry name" value="RuBisCO_small"/>
    <property type="match status" value="1"/>
</dbReference>
<dbReference type="FunFam" id="3.30.190.10:FF:000001">
    <property type="entry name" value="Ribulose bisphosphate carboxylase small chain, chloroplastic"/>
    <property type="match status" value="1"/>
</dbReference>
<dbReference type="Gene3D" id="3.30.190.10">
    <property type="entry name" value="Ribulose bisphosphate carboxylase, small subunit"/>
    <property type="match status" value="1"/>
</dbReference>
<dbReference type="HAMAP" id="MF_00859">
    <property type="entry name" value="RuBisCO_S_bact"/>
    <property type="match status" value="1"/>
</dbReference>
<dbReference type="InterPro" id="IPR024681">
    <property type="entry name" value="RuBisCO_ssu"/>
</dbReference>
<dbReference type="InterPro" id="IPR000894">
    <property type="entry name" value="RuBisCO_ssu_dom"/>
</dbReference>
<dbReference type="InterPro" id="IPR024680">
    <property type="entry name" value="RuBisCO_ssu_N"/>
</dbReference>
<dbReference type="InterPro" id="IPR036385">
    <property type="entry name" value="RuBisCO_ssu_sf"/>
</dbReference>
<dbReference type="PANTHER" id="PTHR31262">
    <property type="entry name" value="RIBULOSE BISPHOSPHATE CARBOXYLASE SMALL CHAIN 1, CHLOROPLASTIC"/>
    <property type="match status" value="1"/>
</dbReference>
<dbReference type="PANTHER" id="PTHR31262:SF27">
    <property type="entry name" value="RIBULOSE BISPHOSPHATE CARBOXYLASE SMALL SUBUNIT, CHLOROPLASTIC 2"/>
    <property type="match status" value="1"/>
</dbReference>
<dbReference type="Pfam" id="PF12338">
    <property type="entry name" value="RbcS"/>
    <property type="match status" value="1"/>
</dbReference>
<dbReference type="Pfam" id="PF00101">
    <property type="entry name" value="RuBisCO_small"/>
    <property type="match status" value="1"/>
</dbReference>
<dbReference type="PRINTS" id="PR00152">
    <property type="entry name" value="RUBISCOSMALL"/>
</dbReference>
<dbReference type="SMART" id="SM00961">
    <property type="entry name" value="RuBisCO_small"/>
    <property type="match status" value="1"/>
</dbReference>
<dbReference type="SUPFAM" id="SSF55239">
    <property type="entry name" value="RuBisCO, small subunit"/>
    <property type="match status" value="1"/>
</dbReference>
<protein>
    <recommendedName>
        <fullName evidence="1">Ribulose bisphosphate carboxylase small subunit, chloroplastic 1</fullName>
        <shortName evidence="1">RuBisCO small subunit 1</shortName>
    </recommendedName>
    <alternativeName>
        <fullName>Ribulose bisphosphate carboxylase small chain PWS4.3, chloroplastic</fullName>
        <shortName>RuBisCO small subunit PWS4.3</shortName>
    </alternativeName>
</protein>
<evidence type="ECO:0000255" key="1">
    <source>
        <dbReference type="HAMAP-Rule" id="MF_00860"/>
    </source>
</evidence>
<comment type="function">
    <text evidence="1">RuBisCO catalyzes two reactions: the carboxylation of D-ribulose 1,5-bisphosphate, the primary event in carbon dioxide fixation, as well as the oxidative fragmentation of the pentose substrate. Both reactions occur simultaneously and in competition at the same active site. Although the small subunit is not catalytic it is essential for maximal activity.</text>
</comment>
<comment type="subunit">
    <text evidence="1">Heterohexadecamer of 8 large and 8 small subunits.</text>
</comment>
<comment type="subcellular location">
    <subcellularLocation>
        <location evidence="1">Plastid</location>
        <location evidence="1">Chloroplast</location>
    </subcellularLocation>
</comment>
<comment type="miscellaneous">
    <text evidence="1">The basic functional RuBisCO is composed of a large chain homodimer in a 'head-to-tail' conformation. In form I RuBisCO this homodimer is arranged in a barrel-like tetramer with the small subunits forming a tetrameric 'cap' on each end of the 'barrel'.</text>
</comment>
<comment type="similarity">
    <text evidence="1">Belongs to the RuBisCO small chain family.</text>
</comment>
<name>RBS1_WHEAT</name>
<feature type="transit peptide" description="Chloroplast" evidence="1">
    <location>
        <begin position="1"/>
        <end position="45"/>
    </location>
</feature>
<feature type="chain" id="PRO_0000031562" description="Ribulose bisphosphate carboxylase small subunit, chloroplastic 1" evidence="1">
    <location>
        <begin position="46"/>
        <end position="174"/>
    </location>
</feature>
<gene>
    <name evidence="1" type="primary">RBCS1</name>
</gene>
<organism>
    <name type="scientific">Triticum aestivum</name>
    <name type="common">Wheat</name>
    <dbReference type="NCBI Taxonomy" id="4565"/>
    <lineage>
        <taxon>Eukaryota</taxon>
        <taxon>Viridiplantae</taxon>
        <taxon>Streptophyta</taxon>
        <taxon>Embryophyta</taxon>
        <taxon>Tracheophyta</taxon>
        <taxon>Spermatophyta</taxon>
        <taxon>Magnoliopsida</taxon>
        <taxon>Liliopsida</taxon>
        <taxon>Poales</taxon>
        <taxon>Poaceae</taxon>
        <taxon>BOP clade</taxon>
        <taxon>Pooideae</taxon>
        <taxon>Triticodae</taxon>
        <taxon>Triticeae</taxon>
        <taxon>Triticinae</taxon>
        <taxon>Triticum</taxon>
    </lineage>
</organism>
<keyword id="KW-0113">Calvin cycle</keyword>
<keyword id="KW-0120">Carbon dioxide fixation</keyword>
<keyword id="KW-0150">Chloroplast</keyword>
<keyword id="KW-0601">Photorespiration</keyword>
<keyword id="KW-0602">Photosynthesis</keyword>
<keyword id="KW-0934">Plastid</keyword>
<keyword id="KW-1185">Reference proteome</keyword>
<keyword id="KW-0809">Transit peptide</keyword>
<proteinExistence type="inferred from homology"/>